<accession>Q2K6Q4</accession>
<protein>
    <recommendedName>
        <fullName evidence="1">Zinc import ATP-binding protein ZnuC</fullName>
        <ecNumber evidence="1">7.2.2.20</ecNumber>
    </recommendedName>
</protein>
<name>ZNUC_RHIEC</name>
<keyword id="KW-0067">ATP-binding</keyword>
<keyword id="KW-0997">Cell inner membrane</keyword>
<keyword id="KW-1003">Cell membrane</keyword>
<keyword id="KW-0406">Ion transport</keyword>
<keyword id="KW-0472">Membrane</keyword>
<keyword id="KW-0547">Nucleotide-binding</keyword>
<keyword id="KW-1185">Reference proteome</keyword>
<keyword id="KW-1278">Translocase</keyword>
<keyword id="KW-0813">Transport</keyword>
<keyword id="KW-0862">Zinc</keyword>
<keyword id="KW-0864">Zinc transport</keyword>
<feature type="chain" id="PRO_0000281535" description="Zinc import ATP-binding protein ZnuC">
    <location>
        <begin position="1"/>
        <end position="312"/>
    </location>
</feature>
<feature type="domain" description="ABC transporter" evidence="1">
    <location>
        <begin position="13"/>
        <end position="228"/>
    </location>
</feature>
<feature type="region of interest" description="Disordered" evidence="2">
    <location>
        <begin position="241"/>
        <end position="312"/>
    </location>
</feature>
<feature type="compositionally biased region" description="Basic and acidic residues" evidence="2">
    <location>
        <begin position="243"/>
        <end position="312"/>
    </location>
</feature>
<feature type="binding site" evidence="1">
    <location>
        <begin position="45"/>
        <end position="52"/>
    </location>
    <ligand>
        <name>ATP</name>
        <dbReference type="ChEBI" id="CHEBI:30616"/>
    </ligand>
</feature>
<comment type="function">
    <text evidence="1">Part of the ABC transporter complex ZnuABC involved in zinc import. Responsible for energy coupling to the transport system.</text>
</comment>
<comment type="catalytic activity">
    <reaction evidence="1">
        <text>Zn(2+)(out) + ATP(in) + H2O(in) = Zn(2+)(in) + ADP(in) + phosphate(in) + H(+)(in)</text>
        <dbReference type="Rhea" id="RHEA:29795"/>
        <dbReference type="ChEBI" id="CHEBI:15377"/>
        <dbReference type="ChEBI" id="CHEBI:15378"/>
        <dbReference type="ChEBI" id="CHEBI:29105"/>
        <dbReference type="ChEBI" id="CHEBI:30616"/>
        <dbReference type="ChEBI" id="CHEBI:43474"/>
        <dbReference type="ChEBI" id="CHEBI:456216"/>
        <dbReference type="EC" id="7.2.2.20"/>
    </reaction>
</comment>
<comment type="subunit">
    <text evidence="1">The complex is composed of two ATP-binding proteins (ZnuC), two transmembrane proteins (ZnuB) and a solute-binding protein (ZnuA).</text>
</comment>
<comment type="subcellular location">
    <subcellularLocation>
        <location evidence="1">Cell inner membrane</location>
        <topology evidence="1">Peripheral membrane protein</topology>
    </subcellularLocation>
</comment>
<comment type="similarity">
    <text evidence="1">Belongs to the ABC transporter superfamily. Zinc importer (TC 3.A.1.15.5) family.</text>
</comment>
<organism>
    <name type="scientific">Rhizobium etli (strain ATCC 51251 / DSM 11541 / JCM 21823 / NBRC 15573 / CFN 42)</name>
    <dbReference type="NCBI Taxonomy" id="347834"/>
    <lineage>
        <taxon>Bacteria</taxon>
        <taxon>Pseudomonadati</taxon>
        <taxon>Pseudomonadota</taxon>
        <taxon>Alphaproteobacteria</taxon>
        <taxon>Hyphomicrobiales</taxon>
        <taxon>Rhizobiaceae</taxon>
        <taxon>Rhizobium/Agrobacterium group</taxon>
        <taxon>Rhizobium</taxon>
    </lineage>
</organism>
<reference key="1">
    <citation type="journal article" date="2006" name="Proc. Natl. Acad. Sci. U.S.A.">
        <title>The partitioned Rhizobium etli genome: genetic and metabolic redundancy in seven interacting replicons.</title>
        <authorList>
            <person name="Gonzalez V."/>
            <person name="Santamaria R.I."/>
            <person name="Bustos P."/>
            <person name="Hernandez-Gonzalez I."/>
            <person name="Medrano-Soto A."/>
            <person name="Moreno-Hagelsieb G."/>
            <person name="Janga S.C."/>
            <person name="Ramirez M.A."/>
            <person name="Jimenez-Jacinto V."/>
            <person name="Collado-Vides J."/>
            <person name="Davila G."/>
        </authorList>
    </citation>
    <scope>NUCLEOTIDE SEQUENCE [LARGE SCALE GENOMIC DNA]</scope>
    <source>
        <strain>ATCC 51251 / DSM 11541 / JCM 21823 / NBRC 15573 / CFN 42</strain>
    </source>
</reference>
<evidence type="ECO:0000255" key="1">
    <source>
        <dbReference type="HAMAP-Rule" id="MF_01725"/>
    </source>
</evidence>
<evidence type="ECO:0000256" key="2">
    <source>
        <dbReference type="SAM" id="MobiDB-lite"/>
    </source>
</evidence>
<gene>
    <name evidence="1" type="primary">znuC</name>
    <name type="ordered locus">RHE_CH02711</name>
</gene>
<sequence>MLSPANAKNQRLVSLEDVGVLRGGRWLVRGVEFSVSRGEIVTLIGPNGSGKSTSAKAAIGVLKPDEGRVERLSGLKVGYVPQKLSIDWTLPLTVRRLMTLTGPLPERDMQAALEAAGIAHMIGAEVQHLSGGEFQRALMARAIARKPDLLVLDEPVQGVDFSGEIALYHLIKSIRNASGCGILLISHDLHVVMAETDTVICLNGHVCCRGTPEAVSRSPEYVRLFGSRAAQTLAVYSHHHDHTHLPDGRVLHADGSVTDHCHPEDGHHAHDSQEHAHGQDHVHAHEHSHDDHHGHDHAHEHAHSRSGEGRHA</sequence>
<dbReference type="EC" id="7.2.2.20" evidence="1"/>
<dbReference type="EMBL" id="CP000133">
    <property type="protein sequence ID" value="ABC91482.1"/>
    <property type="molecule type" value="Genomic_DNA"/>
</dbReference>
<dbReference type="RefSeq" id="WP_011425960.1">
    <property type="nucleotide sequence ID" value="NC_007761.1"/>
</dbReference>
<dbReference type="SMR" id="Q2K6Q4"/>
<dbReference type="KEGG" id="ret:RHE_CH02711"/>
<dbReference type="eggNOG" id="COG1121">
    <property type="taxonomic scope" value="Bacteria"/>
</dbReference>
<dbReference type="HOGENOM" id="CLU_000604_1_11_5"/>
<dbReference type="OrthoDB" id="9780942at2"/>
<dbReference type="Proteomes" id="UP000001936">
    <property type="component" value="Chromosome"/>
</dbReference>
<dbReference type="GO" id="GO:0005886">
    <property type="term" value="C:plasma membrane"/>
    <property type="evidence" value="ECO:0007669"/>
    <property type="project" value="UniProtKB-SubCell"/>
</dbReference>
<dbReference type="GO" id="GO:0015633">
    <property type="term" value="F:ABC-type zinc transporter activity"/>
    <property type="evidence" value="ECO:0007669"/>
    <property type="project" value="UniProtKB-EC"/>
</dbReference>
<dbReference type="GO" id="GO:0005524">
    <property type="term" value="F:ATP binding"/>
    <property type="evidence" value="ECO:0007669"/>
    <property type="project" value="UniProtKB-KW"/>
</dbReference>
<dbReference type="GO" id="GO:0016887">
    <property type="term" value="F:ATP hydrolysis activity"/>
    <property type="evidence" value="ECO:0007669"/>
    <property type="project" value="InterPro"/>
</dbReference>
<dbReference type="GO" id="GO:0010043">
    <property type="term" value="P:response to zinc ion"/>
    <property type="evidence" value="ECO:0007669"/>
    <property type="project" value="TreeGrafter"/>
</dbReference>
<dbReference type="Gene3D" id="3.40.50.300">
    <property type="entry name" value="P-loop containing nucleotide triphosphate hydrolases"/>
    <property type="match status" value="1"/>
</dbReference>
<dbReference type="InterPro" id="IPR003593">
    <property type="entry name" value="AAA+_ATPase"/>
</dbReference>
<dbReference type="InterPro" id="IPR003439">
    <property type="entry name" value="ABC_transporter-like_ATP-bd"/>
</dbReference>
<dbReference type="InterPro" id="IPR017871">
    <property type="entry name" value="ABC_transporter-like_CS"/>
</dbReference>
<dbReference type="InterPro" id="IPR050153">
    <property type="entry name" value="Metal_Ion_Import_ABC"/>
</dbReference>
<dbReference type="InterPro" id="IPR027417">
    <property type="entry name" value="P-loop_NTPase"/>
</dbReference>
<dbReference type="PANTHER" id="PTHR42734">
    <property type="entry name" value="METAL TRANSPORT SYSTEM ATP-BINDING PROTEIN TM_0124-RELATED"/>
    <property type="match status" value="1"/>
</dbReference>
<dbReference type="PANTHER" id="PTHR42734:SF9">
    <property type="entry name" value="ZINC IMPORT ATP-BINDING PROTEIN ZNUC"/>
    <property type="match status" value="1"/>
</dbReference>
<dbReference type="Pfam" id="PF00005">
    <property type="entry name" value="ABC_tran"/>
    <property type="match status" value="1"/>
</dbReference>
<dbReference type="SMART" id="SM00382">
    <property type="entry name" value="AAA"/>
    <property type="match status" value="1"/>
</dbReference>
<dbReference type="SUPFAM" id="SSF52540">
    <property type="entry name" value="P-loop containing nucleoside triphosphate hydrolases"/>
    <property type="match status" value="1"/>
</dbReference>
<dbReference type="PROSITE" id="PS00211">
    <property type="entry name" value="ABC_TRANSPORTER_1"/>
    <property type="match status" value="1"/>
</dbReference>
<dbReference type="PROSITE" id="PS50893">
    <property type="entry name" value="ABC_TRANSPORTER_2"/>
    <property type="match status" value="1"/>
</dbReference>
<dbReference type="PROSITE" id="PS51298">
    <property type="entry name" value="ZNUC"/>
    <property type="match status" value="1"/>
</dbReference>
<proteinExistence type="inferred from homology"/>